<feature type="chain" id="PRO_0000268811" description="Small ribosomal subunit protein uS14">
    <location>
        <begin position="1"/>
        <end position="56"/>
    </location>
</feature>
<feature type="binding site" evidence="1">
    <location>
        <position position="21"/>
    </location>
    <ligand>
        <name>Zn(2+)</name>
        <dbReference type="ChEBI" id="CHEBI:29105"/>
    </ligand>
</feature>
<feature type="binding site" evidence="1">
    <location>
        <position position="24"/>
    </location>
    <ligand>
        <name>Zn(2+)</name>
        <dbReference type="ChEBI" id="CHEBI:29105"/>
    </ligand>
</feature>
<feature type="binding site" evidence="1">
    <location>
        <position position="39"/>
    </location>
    <ligand>
        <name>Zn(2+)</name>
        <dbReference type="ChEBI" id="CHEBI:29105"/>
    </ligand>
</feature>
<feature type="binding site" evidence="1">
    <location>
        <position position="42"/>
    </location>
    <ligand>
        <name>Zn(2+)</name>
        <dbReference type="ChEBI" id="CHEBI:29105"/>
    </ligand>
</feature>
<evidence type="ECO:0000255" key="1"/>
<evidence type="ECO:0000305" key="2"/>
<name>RS29_CANGA</name>
<sequence length="56" mass="6720">MAHENVWFSHPRRFGKGSRQCRVCSSHTGLIRKYDLNICRQCFRERASDIGFNKYR</sequence>
<keyword id="KW-0479">Metal-binding</keyword>
<keyword id="KW-1185">Reference proteome</keyword>
<keyword id="KW-0687">Ribonucleoprotein</keyword>
<keyword id="KW-0689">Ribosomal protein</keyword>
<keyword id="KW-0862">Zinc</keyword>
<gene>
    <name type="primary">RPS29</name>
    <name type="ordered locus">CAGL0D00858g</name>
</gene>
<accession>Q6FWE3</accession>
<proteinExistence type="inferred from homology"/>
<reference key="1">
    <citation type="journal article" date="2004" name="Nature">
        <title>Genome evolution in yeasts.</title>
        <authorList>
            <person name="Dujon B."/>
            <person name="Sherman D."/>
            <person name="Fischer G."/>
            <person name="Durrens P."/>
            <person name="Casaregola S."/>
            <person name="Lafontaine I."/>
            <person name="de Montigny J."/>
            <person name="Marck C."/>
            <person name="Neuveglise C."/>
            <person name="Talla E."/>
            <person name="Goffard N."/>
            <person name="Frangeul L."/>
            <person name="Aigle M."/>
            <person name="Anthouard V."/>
            <person name="Babour A."/>
            <person name="Barbe V."/>
            <person name="Barnay S."/>
            <person name="Blanchin S."/>
            <person name="Beckerich J.-M."/>
            <person name="Beyne E."/>
            <person name="Bleykasten C."/>
            <person name="Boisrame A."/>
            <person name="Boyer J."/>
            <person name="Cattolico L."/>
            <person name="Confanioleri F."/>
            <person name="de Daruvar A."/>
            <person name="Despons L."/>
            <person name="Fabre E."/>
            <person name="Fairhead C."/>
            <person name="Ferry-Dumazet H."/>
            <person name="Groppi A."/>
            <person name="Hantraye F."/>
            <person name="Hennequin C."/>
            <person name="Jauniaux N."/>
            <person name="Joyet P."/>
            <person name="Kachouri R."/>
            <person name="Kerrest A."/>
            <person name="Koszul R."/>
            <person name="Lemaire M."/>
            <person name="Lesur I."/>
            <person name="Ma L."/>
            <person name="Muller H."/>
            <person name="Nicaud J.-M."/>
            <person name="Nikolski M."/>
            <person name="Oztas S."/>
            <person name="Ozier-Kalogeropoulos O."/>
            <person name="Pellenz S."/>
            <person name="Potier S."/>
            <person name="Richard G.-F."/>
            <person name="Straub M.-L."/>
            <person name="Suleau A."/>
            <person name="Swennen D."/>
            <person name="Tekaia F."/>
            <person name="Wesolowski-Louvel M."/>
            <person name="Westhof E."/>
            <person name="Wirth B."/>
            <person name="Zeniou-Meyer M."/>
            <person name="Zivanovic Y."/>
            <person name="Bolotin-Fukuhara M."/>
            <person name="Thierry A."/>
            <person name="Bouchier C."/>
            <person name="Caudron B."/>
            <person name="Scarpelli C."/>
            <person name="Gaillardin C."/>
            <person name="Weissenbach J."/>
            <person name="Wincker P."/>
            <person name="Souciet J.-L."/>
        </authorList>
    </citation>
    <scope>NUCLEOTIDE SEQUENCE [LARGE SCALE GENOMIC DNA]</scope>
    <source>
        <strain>ATCC 2001 / BCRC 20586 / JCM 3761 / NBRC 0622 / NRRL Y-65 / CBS 138</strain>
    </source>
</reference>
<organism>
    <name type="scientific">Candida glabrata (strain ATCC 2001 / BCRC 20586 / JCM 3761 / NBRC 0622 / NRRL Y-65 / CBS 138)</name>
    <name type="common">Yeast</name>
    <name type="synonym">Nakaseomyces glabratus</name>
    <dbReference type="NCBI Taxonomy" id="284593"/>
    <lineage>
        <taxon>Eukaryota</taxon>
        <taxon>Fungi</taxon>
        <taxon>Dikarya</taxon>
        <taxon>Ascomycota</taxon>
        <taxon>Saccharomycotina</taxon>
        <taxon>Saccharomycetes</taxon>
        <taxon>Saccharomycetales</taxon>
        <taxon>Saccharomycetaceae</taxon>
        <taxon>Nakaseomyces</taxon>
    </lineage>
</organism>
<dbReference type="EMBL" id="CR380950">
    <property type="protein sequence ID" value="CAG58362.1"/>
    <property type="molecule type" value="Genomic_DNA"/>
</dbReference>
<dbReference type="RefSeq" id="XP_445451.1">
    <property type="nucleotide sequence ID" value="XM_445451.1"/>
</dbReference>
<dbReference type="SMR" id="Q6FWE3"/>
<dbReference type="FunCoup" id="Q6FWE3">
    <property type="interactions" value="780"/>
</dbReference>
<dbReference type="STRING" id="284593.Q6FWE3"/>
<dbReference type="EnsemblFungi" id="CAGL0D00858g-T">
    <property type="protein sequence ID" value="CAGL0D00858g-T-p1"/>
    <property type="gene ID" value="CAGL0D00858g"/>
</dbReference>
<dbReference type="KEGG" id="cgr:2887176"/>
<dbReference type="CGD" id="CAL0128283">
    <property type="gene designation" value="CAGL0D00858g"/>
</dbReference>
<dbReference type="VEuPathDB" id="FungiDB:B1J91_D00858g"/>
<dbReference type="VEuPathDB" id="FungiDB:CAGL0D00858g"/>
<dbReference type="eggNOG" id="KOG3506">
    <property type="taxonomic scope" value="Eukaryota"/>
</dbReference>
<dbReference type="HOGENOM" id="CLU_177289_1_1_1"/>
<dbReference type="InParanoid" id="Q6FWE3"/>
<dbReference type="OMA" id="HCFREIA"/>
<dbReference type="Proteomes" id="UP000002428">
    <property type="component" value="Chromosome D"/>
</dbReference>
<dbReference type="GO" id="GO:0022627">
    <property type="term" value="C:cytosolic small ribosomal subunit"/>
    <property type="evidence" value="ECO:0007669"/>
    <property type="project" value="EnsemblFungi"/>
</dbReference>
<dbReference type="GO" id="GO:0005576">
    <property type="term" value="C:extracellular region"/>
    <property type="evidence" value="ECO:0000314"/>
    <property type="project" value="CGD"/>
</dbReference>
<dbReference type="GO" id="GO:0003735">
    <property type="term" value="F:structural constituent of ribosome"/>
    <property type="evidence" value="ECO:0007669"/>
    <property type="project" value="EnsemblFungi"/>
</dbReference>
<dbReference type="GO" id="GO:0008270">
    <property type="term" value="F:zinc ion binding"/>
    <property type="evidence" value="ECO:0007669"/>
    <property type="project" value="InterPro"/>
</dbReference>
<dbReference type="GO" id="GO:0002181">
    <property type="term" value="P:cytoplasmic translation"/>
    <property type="evidence" value="ECO:0007669"/>
    <property type="project" value="TreeGrafter"/>
</dbReference>
<dbReference type="FunFam" id="4.10.830.10:FF:000002">
    <property type="entry name" value="40S ribosomal protein S29"/>
    <property type="match status" value="1"/>
</dbReference>
<dbReference type="Gene3D" id="4.10.830.10">
    <property type="entry name" value="30s Ribosomal Protein S14, Chain N"/>
    <property type="match status" value="1"/>
</dbReference>
<dbReference type="InterPro" id="IPR001209">
    <property type="entry name" value="Ribosomal_uS14"/>
</dbReference>
<dbReference type="InterPro" id="IPR018271">
    <property type="entry name" value="Ribosomal_uS14_CS"/>
</dbReference>
<dbReference type="InterPro" id="IPR039744">
    <property type="entry name" value="RIbosomal_uS14_euk_arc"/>
</dbReference>
<dbReference type="InterPro" id="IPR043140">
    <property type="entry name" value="Ribosomal_uS14_sf"/>
</dbReference>
<dbReference type="NCBIfam" id="NF004424">
    <property type="entry name" value="PRK05766.1"/>
    <property type="match status" value="1"/>
</dbReference>
<dbReference type="PANTHER" id="PTHR12010">
    <property type="entry name" value="40S RIBOSOMAL PROTEIN S29"/>
    <property type="match status" value="1"/>
</dbReference>
<dbReference type="PANTHER" id="PTHR12010:SF2">
    <property type="entry name" value="40S RIBOSOMAL PROTEIN S29"/>
    <property type="match status" value="1"/>
</dbReference>
<dbReference type="Pfam" id="PF00253">
    <property type="entry name" value="Ribosomal_S14"/>
    <property type="match status" value="1"/>
</dbReference>
<dbReference type="PROSITE" id="PS00527">
    <property type="entry name" value="RIBOSOMAL_S14"/>
    <property type="match status" value="1"/>
</dbReference>
<protein>
    <recommendedName>
        <fullName evidence="2">Small ribosomal subunit protein uS14</fullName>
    </recommendedName>
    <alternativeName>
        <fullName>40S ribosomal protein S29</fullName>
    </alternativeName>
</protein>
<comment type="cofactor">
    <cofactor evidence="2">
        <name>Zn(2+)</name>
        <dbReference type="ChEBI" id="CHEBI:29105"/>
    </cofactor>
    <text evidence="2">Binds 1 zinc ion per subunit.</text>
</comment>
<comment type="similarity">
    <text evidence="2">Belongs to the universal ribosomal protein uS14 family.</text>
</comment>